<sequence>MRTEYCGQLNLSHVGQEVTLCGWVNRRRDLGGLIFIDMRDREGIVQVFFDPDQKAAFDKAYDLRNEFCIQIVGTVRARPDSQINKDMATGEVEVFAHALEIINRSEPLPLDSNQVNSEEARLKYRYLDLRRPEMADRLKTRAKITSFVRRFMDSHGFLDIETPMLTKATPEGARDYLVPSRVHKGKFYALPQSPQLFKQLLMMSGFDRYYQIVKCFRDEDLRADRQPEFTQIDVETSFMTAEQVREVMEKLARELWLDVKNVDLGDFPIMTFEEAMRRYGSDKPDLRNPLELVDVADLVKDVEFKVFSGPANDAKGRVAAICVPGGAQLTRKLIDEYGAFVNIYGAKGLAWLKVNDRAAGMEGVQSPIAKFLSAEVLEAILARTNAQSGDILFFGADSFKIVTDAMGALRLKLGRDLELTKLDSWAPLWVVDFPMFEEDGEGGLAAMHHPFTAPRDMSPEELAGTPTNAIANAYDMVINGYEVGGGSVRIHRSEMQQTVFSILGINEHEQREKFGFLLDALKYGTPPHAGLAFGLDRLVMLLTGTDNIRDVIAFPKTTAAACLMTEAPSFANPASLQELAICVVKKASEQESE</sequence>
<protein>
    <recommendedName>
        <fullName evidence="1">Aspartate--tRNA ligase</fullName>
        <ecNumber evidence="1">6.1.1.12</ecNumber>
    </recommendedName>
    <alternativeName>
        <fullName evidence="1">Aspartyl-tRNA synthetase</fullName>
        <shortName evidence="1">AspRS</shortName>
    </alternativeName>
</protein>
<accession>A8GFJ2</accession>
<name>SYD_SERP5</name>
<proteinExistence type="inferred from homology"/>
<comment type="function">
    <text evidence="1">Catalyzes the attachment of L-aspartate to tRNA(Asp) in a two-step reaction: L-aspartate is first activated by ATP to form Asp-AMP and then transferred to the acceptor end of tRNA(Asp).</text>
</comment>
<comment type="catalytic activity">
    <reaction evidence="1">
        <text>tRNA(Asp) + L-aspartate + ATP = L-aspartyl-tRNA(Asp) + AMP + diphosphate</text>
        <dbReference type="Rhea" id="RHEA:19649"/>
        <dbReference type="Rhea" id="RHEA-COMP:9660"/>
        <dbReference type="Rhea" id="RHEA-COMP:9678"/>
        <dbReference type="ChEBI" id="CHEBI:29991"/>
        <dbReference type="ChEBI" id="CHEBI:30616"/>
        <dbReference type="ChEBI" id="CHEBI:33019"/>
        <dbReference type="ChEBI" id="CHEBI:78442"/>
        <dbReference type="ChEBI" id="CHEBI:78516"/>
        <dbReference type="ChEBI" id="CHEBI:456215"/>
        <dbReference type="EC" id="6.1.1.12"/>
    </reaction>
</comment>
<comment type="subunit">
    <text evidence="1">Homodimer.</text>
</comment>
<comment type="subcellular location">
    <subcellularLocation>
        <location evidence="1">Cytoplasm</location>
    </subcellularLocation>
</comment>
<comment type="similarity">
    <text evidence="1">Belongs to the class-II aminoacyl-tRNA synthetase family. Type 1 subfamily.</text>
</comment>
<reference key="1">
    <citation type="submission" date="2007-09" db="EMBL/GenBank/DDBJ databases">
        <title>Complete sequence of chromosome of Serratia proteamaculans 568.</title>
        <authorList>
            <consortium name="US DOE Joint Genome Institute"/>
            <person name="Copeland A."/>
            <person name="Lucas S."/>
            <person name="Lapidus A."/>
            <person name="Barry K."/>
            <person name="Glavina del Rio T."/>
            <person name="Dalin E."/>
            <person name="Tice H."/>
            <person name="Pitluck S."/>
            <person name="Chain P."/>
            <person name="Malfatti S."/>
            <person name="Shin M."/>
            <person name="Vergez L."/>
            <person name="Schmutz J."/>
            <person name="Larimer F."/>
            <person name="Land M."/>
            <person name="Hauser L."/>
            <person name="Kyrpides N."/>
            <person name="Kim E."/>
            <person name="Taghavi S."/>
            <person name="Newman L."/>
            <person name="Vangronsveld J."/>
            <person name="van der Lelie D."/>
            <person name="Richardson P."/>
        </authorList>
    </citation>
    <scope>NUCLEOTIDE SEQUENCE [LARGE SCALE GENOMIC DNA]</scope>
    <source>
        <strain>568</strain>
    </source>
</reference>
<dbReference type="EC" id="6.1.1.12" evidence="1"/>
<dbReference type="EMBL" id="CP000826">
    <property type="protein sequence ID" value="ABV41882.1"/>
    <property type="molecule type" value="Genomic_DNA"/>
</dbReference>
<dbReference type="SMR" id="A8GFJ2"/>
<dbReference type="STRING" id="399741.Spro_2781"/>
<dbReference type="KEGG" id="spe:Spro_2781"/>
<dbReference type="eggNOG" id="COG0173">
    <property type="taxonomic scope" value="Bacteria"/>
</dbReference>
<dbReference type="HOGENOM" id="CLU_014330_3_2_6"/>
<dbReference type="OrthoDB" id="9802326at2"/>
<dbReference type="GO" id="GO:0005737">
    <property type="term" value="C:cytoplasm"/>
    <property type="evidence" value="ECO:0007669"/>
    <property type="project" value="UniProtKB-SubCell"/>
</dbReference>
<dbReference type="GO" id="GO:0004815">
    <property type="term" value="F:aspartate-tRNA ligase activity"/>
    <property type="evidence" value="ECO:0007669"/>
    <property type="project" value="UniProtKB-UniRule"/>
</dbReference>
<dbReference type="GO" id="GO:0005524">
    <property type="term" value="F:ATP binding"/>
    <property type="evidence" value="ECO:0007669"/>
    <property type="project" value="UniProtKB-UniRule"/>
</dbReference>
<dbReference type="GO" id="GO:0003676">
    <property type="term" value="F:nucleic acid binding"/>
    <property type="evidence" value="ECO:0007669"/>
    <property type="project" value="InterPro"/>
</dbReference>
<dbReference type="GO" id="GO:0006422">
    <property type="term" value="P:aspartyl-tRNA aminoacylation"/>
    <property type="evidence" value="ECO:0007669"/>
    <property type="project" value="UniProtKB-UniRule"/>
</dbReference>
<dbReference type="CDD" id="cd00777">
    <property type="entry name" value="AspRS_core"/>
    <property type="match status" value="1"/>
</dbReference>
<dbReference type="CDD" id="cd04317">
    <property type="entry name" value="EcAspRS_like_N"/>
    <property type="match status" value="1"/>
</dbReference>
<dbReference type="FunFam" id="2.40.50.140:FF:000080">
    <property type="entry name" value="Aspartate--tRNA ligase"/>
    <property type="match status" value="1"/>
</dbReference>
<dbReference type="Gene3D" id="3.30.930.10">
    <property type="entry name" value="Bira Bifunctional Protein, Domain 2"/>
    <property type="match status" value="1"/>
</dbReference>
<dbReference type="Gene3D" id="3.30.1360.30">
    <property type="entry name" value="GAD-like domain"/>
    <property type="match status" value="1"/>
</dbReference>
<dbReference type="Gene3D" id="2.40.50.140">
    <property type="entry name" value="Nucleic acid-binding proteins"/>
    <property type="match status" value="1"/>
</dbReference>
<dbReference type="HAMAP" id="MF_00044">
    <property type="entry name" value="Asp_tRNA_synth_type1"/>
    <property type="match status" value="1"/>
</dbReference>
<dbReference type="InterPro" id="IPR004364">
    <property type="entry name" value="Aa-tRNA-synt_II"/>
</dbReference>
<dbReference type="InterPro" id="IPR006195">
    <property type="entry name" value="aa-tRNA-synth_II"/>
</dbReference>
<dbReference type="InterPro" id="IPR045864">
    <property type="entry name" value="aa-tRNA-synth_II/BPL/LPL"/>
</dbReference>
<dbReference type="InterPro" id="IPR004524">
    <property type="entry name" value="Asp-tRNA-ligase_1"/>
</dbReference>
<dbReference type="InterPro" id="IPR047089">
    <property type="entry name" value="Asp-tRNA-ligase_1_N"/>
</dbReference>
<dbReference type="InterPro" id="IPR002312">
    <property type="entry name" value="Asp/Asn-tRNA-synth_IIb"/>
</dbReference>
<dbReference type="InterPro" id="IPR047090">
    <property type="entry name" value="AspRS_core"/>
</dbReference>
<dbReference type="InterPro" id="IPR004115">
    <property type="entry name" value="GAD-like_sf"/>
</dbReference>
<dbReference type="InterPro" id="IPR029351">
    <property type="entry name" value="GAD_dom"/>
</dbReference>
<dbReference type="InterPro" id="IPR012340">
    <property type="entry name" value="NA-bd_OB-fold"/>
</dbReference>
<dbReference type="InterPro" id="IPR004365">
    <property type="entry name" value="NA-bd_OB_tRNA"/>
</dbReference>
<dbReference type="NCBIfam" id="TIGR00459">
    <property type="entry name" value="aspS_bact"/>
    <property type="match status" value="1"/>
</dbReference>
<dbReference type="NCBIfam" id="NF001750">
    <property type="entry name" value="PRK00476.1"/>
    <property type="match status" value="1"/>
</dbReference>
<dbReference type="PANTHER" id="PTHR22594:SF5">
    <property type="entry name" value="ASPARTATE--TRNA LIGASE, MITOCHONDRIAL"/>
    <property type="match status" value="1"/>
</dbReference>
<dbReference type="PANTHER" id="PTHR22594">
    <property type="entry name" value="ASPARTYL/LYSYL-TRNA SYNTHETASE"/>
    <property type="match status" value="1"/>
</dbReference>
<dbReference type="Pfam" id="PF02938">
    <property type="entry name" value="GAD"/>
    <property type="match status" value="1"/>
</dbReference>
<dbReference type="Pfam" id="PF00152">
    <property type="entry name" value="tRNA-synt_2"/>
    <property type="match status" value="1"/>
</dbReference>
<dbReference type="Pfam" id="PF01336">
    <property type="entry name" value="tRNA_anti-codon"/>
    <property type="match status" value="1"/>
</dbReference>
<dbReference type="PRINTS" id="PR01042">
    <property type="entry name" value="TRNASYNTHASP"/>
</dbReference>
<dbReference type="SUPFAM" id="SSF55681">
    <property type="entry name" value="Class II aaRS and biotin synthetases"/>
    <property type="match status" value="1"/>
</dbReference>
<dbReference type="SUPFAM" id="SSF55261">
    <property type="entry name" value="GAD domain-like"/>
    <property type="match status" value="1"/>
</dbReference>
<dbReference type="SUPFAM" id="SSF50249">
    <property type="entry name" value="Nucleic acid-binding proteins"/>
    <property type="match status" value="1"/>
</dbReference>
<dbReference type="PROSITE" id="PS50862">
    <property type="entry name" value="AA_TRNA_LIGASE_II"/>
    <property type="match status" value="1"/>
</dbReference>
<evidence type="ECO:0000255" key="1">
    <source>
        <dbReference type="HAMAP-Rule" id="MF_00044"/>
    </source>
</evidence>
<gene>
    <name evidence="1" type="primary">aspS</name>
    <name type="ordered locus">Spro_2781</name>
</gene>
<organism>
    <name type="scientific">Serratia proteamaculans (strain 568)</name>
    <dbReference type="NCBI Taxonomy" id="399741"/>
    <lineage>
        <taxon>Bacteria</taxon>
        <taxon>Pseudomonadati</taxon>
        <taxon>Pseudomonadota</taxon>
        <taxon>Gammaproteobacteria</taxon>
        <taxon>Enterobacterales</taxon>
        <taxon>Yersiniaceae</taxon>
        <taxon>Serratia</taxon>
    </lineage>
</organism>
<keyword id="KW-0030">Aminoacyl-tRNA synthetase</keyword>
<keyword id="KW-0067">ATP-binding</keyword>
<keyword id="KW-0963">Cytoplasm</keyword>
<keyword id="KW-0436">Ligase</keyword>
<keyword id="KW-0547">Nucleotide-binding</keyword>
<keyword id="KW-0648">Protein biosynthesis</keyword>
<feature type="chain" id="PRO_1000057306" description="Aspartate--tRNA ligase">
    <location>
        <begin position="1"/>
        <end position="593"/>
    </location>
</feature>
<feature type="region of interest" description="Aspartate" evidence="1">
    <location>
        <begin position="195"/>
        <end position="198"/>
    </location>
</feature>
<feature type="binding site" evidence="1">
    <location>
        <position position="171"/>
    </location>
    <ligand>
        <name>L-aspartate</name>
        <dbReference type="ChEBI" id="CHEBI:29991"/>
    </ligand>
</feature>
<feature type="binding site" evidence="1">
    <location>
        <begin position="217"/>
        <end position="219"/>
    </location>
    <ligand>
        <name>ATP</name>
        <dbReference type="ChEBI" id="CHEBI:30616"/>
    </ligand>
</feature>
<feature type="binding site" evidence="1">
    <location>
        <position position="217"/>
    </location>
    <ligand>
        <name>L-aspartate</name>
        <dbReference type="ChEBI" id="CHEBI:29991"/>
    </ligand>
</feature>
<feature type="binding site" evidence="1">
    <location>
        <position position="226"/>
    </location>
    <ligand>
        <name>ATP</name>
        <dbReference type="ChEBI" id="CHEBI:30616"/>
    </ligand>
</feature>
<feature type="binding site" evidence="1">
    <location>
        <position position="448"/>
    </location>
    <ligand>
        <name>L-aspartate</name>
        <dbReference type="ChEBI" id="CHEBI:29991"/>
    </ligand>
</feature>
<feature type="binding site" evidence="1">
    <location>
        <position position="482"/>
    </location>
    <ligand>
        <name>ATP</name>
        <dbReference type="ChEBI" id="CHEBI:30616"/>
    </ligand>
</feature>
<feature type="binding site" evidence="1">
    <location>
        <position position="489"/>
    </location>
    <ligand>
        <name>L-aspartate</name>
        <dbReference type="ChEBI" id="CHEBI:29991"/>
    </ligand>
</feature>
<feature type="binding site" evidence="1">
    <location>
        <begin position="534"/>
        <end position="537"/>
    </location>
    <ligand>
        <name>ATP</name>
        <dbReference type="ChEBI" id="CHEBI:30616"/>
    </ligand>
</feature>